<comment type="function">
    <text evidence="1 3">The subtype gamma methyltransferase (M) subunit of a type I restriction enzyme. The M and S subunits together form a methyltransferase (MTase) that methylates two adenine residues of the sequence 5'-GAGN(7)ATGC-3'. In the presence of the R subunit the complex can also act as an endonuclease, binding to the same target sequence but cutting the DNA some distance from this site. Whether the DNA is cut or modified depends on the methylation state of the target sequence. When the target site is unmodified, the DNA is cut. When the target site is hemimethylated, the complex acts as a maintenance MTase modifying the DNA so that both strands become methylated. After locating a non-methylated recognition site, the enzyme complex serves as a molecular motor that translocates DNA in an ATP-dependent manner until a collision occurs that triggers cleavage.</text>
</comment>
<comment type="catalytic activity">
    <reaction evidence="1">
        <text>a 2'-deoxyadenosine in DNA + S-adenosyl-L-methionine = an N(6)-methyl-2'-deoxyadenosine in DNA + S-adenosyl-L-homocysteine + H(+)</text>
        <dbReference type="Rhea" id="RHEA:15197"/>
        <dbReference type="Rhea" id="RHEA-COMP:12418"/>
        <dbReference type="Rhea" id="RHEA-COMP:12419"/>
        <dbReference type="ChEBI" id="CHEBI:15378"/>
        <dbReference type="ChEBI" id="CHEBI:57856"/>
        <dbReference type="ChEBI" id="CHEBI:59789"/>
        <dbReference type="ChEBI" id="CHEBI:90615"/>
        <dbReference type="ChEBI" id="CHEBI:90616"/>
        <dbReference type="EC" id="2.1.1.72"/>
    </reaction>
</comment>
<comment type="subunit">
    <text evidence="1">The type I restriction/modification system is composed of three polypeptides R, M and S; the restriction enzyme has stoichiometry R(2)M(2)S(1) while the methyltransferase is M(2)S(1).</text>
</comment>
<comment type="miscellaneous">
    <text evidence="1">Type I restriction and modification enzymes are complex, multifunctional systems which require ATP, S-adenosyl methionine and Mg(2+) as cofactors and, in addition to their endonucleolytic and methylase activities, are potent DNA-dependent ATPases.</text>
</comment>
<comment type="similarity">
    <text evidence="4">Belongs to the N(4)/N(6)-methyltransferase family.</text>
</comment>
<organism>
    <name type="scientific">Escherichia coli</name>
    <dbReference type="NCBI Taxonomy" id="562"/>
    <lineage>
        <taxon>Bacteria</taxon>
        <taxon>Pseudomonadati</taxon>
        <taxon>Pseudomonadota</taxon>
        <taxon>Gammaproteobacteria</taxon>
        <taxon>Enterobacterales</taxon>
        <taxon>Enterobacteriaceae</taxon>
        <taxon>Escherichia</taxon>
    </lineage>
</organism>
<dbReference type="EC" id="2.1.1.72" evidence="1"/>
<dbReference type="EMBL" id="L18759">
    <property type="protein sequence ID" value="AAD15049.1"/>
    <property type="molecule type" value="Genomic_DNA"/>
</dbReference>
<dbReference type="PIR" id="I41293">
    <property type="entry name" value="I41293"/>
</dbReference>
<dbReference type="RefSeq" id="WP_058649287.1">
    <property type="nucleotide sequence ID" value="NZ_NMFU01000051.1"/>
</dbReference>
<dbReference type="SMR" id="Q47282"/>
<dbReference type="REBASE" id="101119">
    <property type="entry name" value="M.Rga602ORF2367P"/>
</dbReference>
<dbReference type="REBASE" id="157593">
    <property type="entry name" value="M.Rso10709ORF3042P"/>
</dbReference>
<dbReference type="REBASE" id="201010">
    <property type="entry name" value="M.RspNXC14ORF3392P"/>
</dbReference>
<dbReference type="REBASE" id="205293">
    <property type="entry name" value="M.Bso1395ORF934P"/>
</dbReference>
<dbReference type="REBASE" id="211745">
    <property type="entry name" value="M.RphB5ORF556P"/>
</dbReference>
<dbReference type="REBASE" id="211757">
    <property type="entry name" value="M.RspL182ORF1057P"/>
</dbReference>
<dbReference type="REBASE" id="233080">
    <property type="entry name" value="M.Sen4024ORF3807P"/>
</dbReference>
<dbReference type="REBASE" id="256765">
    <property type="entry name" value="M.Ssp9304ORF612P"/>
</dbReference>
<dbReference type="REBASE" id="3386">
    <property type="entry name" value="M.EcoEI"/>
</dbReference>
<dbReference type="REBASE" id="618856">
    <property type="entry name" value="M.LspCC1I"/>
</dbReference>
<dbReference type="PRO" id="PR:Q47282"/>
<dbReference type="GO" id="GO:0003677">
    <property type="term" value="F:DNA binding"/>
    <property type="evidence" value="ECO:0007669"/>
    <property type="project" value="UniProtKB-KW"/>
</dbReference>
<dbReference type="GO" id="GO:0008170">
    <property type="term" value="F:N-methyltransferase activity"/>
    <property type="evidence" value="ECO:0007669"/>
    <property type="project" value="InterPro"/>
</dbReference>
<dbReference type="GO" id="GO:0009007">
    <property type="term" value="F:site-specific DNA-methyltransferase (adenine-specific) activity"/>
    <property type="evidence" value="ECO:0007669"/>
    <property type="project" value="UniProtKB-EC"/>
</dbReference>
<dbReference type="GO" id="GO:0009307">
    <property type="term" value="P:DNA restriction-modification system"/>
    <property type="evidence" value="ECO:0007669"/>
    <property type="project" value="UniProtKB-KW"/>
</dbReference>
<dbReference type="GO" id="GO:0032259">
    <property type="term" value="P:methylation"/>
    <property type="evidence" value="ECO:0007669"/>
    <property type="project" value="UniProtKB-KW"/>
</dbReference>
<dbReference type="Gene3D" id="1.20.1260.30">
    <property type="match status" value="1"/>
</dbReference>
<dbReference type="Gene3D" id="3.40.50.150">
    <property type="entry name" value="Vaccinia Virus protein VP39"/>
    <property type="match status" value="1"/>
</dbReference>
<dbReference type="InterPro" id="IPR022749">
    <property type="entry name" value="D12N6_MeTrfase_N"/>
</dbReference>
<dbReference type="InterPro" id="IPR051537">
    <property type="entry name" value="DNA_Adenine_Mtase"/>
</dbReference>
<dbReference type="InterPro" id="IPR003356">
    <property type="entry name" value="DNA_methylase_A-5"/>
</dbReference>
<dbReference type="InterPro" id="IPR002052">
    <property type="entry name" value="DNA_methylase_N6_adenine_CS"/>
</dbReference>
<dbReference type="InterPro" id="IPR029063">
    <property type="entry name" value="SAM-dependent_MTases_sf"/>
</dbReference>
<dbReference type="InterPro" id="IPR038333">
    <property type="entry name" value="T1MK-like_N_sf"/>
</dbReference>
<dbReference type="PANTHER" id="PTHR42933">
    <property type="entry name" value="SLR6095 PROTEIN"/>
    <property type="match status" value="1"/>
</dbReference>
<dbReference type="PANTHER" id="PTHR42933:SF4">
    <property type="entry name" value="TYPE I RESTRICTION ENZYME ECOKI METHYLASE SUBUNIT"/>
    <property type="match status" value="1"/>
</dbReference>
<dbReference type="Pfam" id="PF12161">
    <property type="entry name" value="HsdM_N"/>
    <property type="match status" value="1"/>
</dbReference>
<dbReference type="Pfam" id="PF02384">
    <property type="entry name" value="N6_Mtase"/>
    <property type="match status" value="1"/>
</dbReference>
<dbReference type="PRINTS" id="PR00507">
    <property type="entry name" value="N12N6MTFRASE"/>
</dbReference>
<dbReference type="SUPFAM" id="SSF53335">
    <property type="entry name" value="S-adenosyl-L-methionine-dependent methyltransferases"/>
    <property type="match status" value="1"/>
</dbReference>
<dbReference type="PROSITE" id="PS00092">
    <property type="entry name" value="N6_MTASE"/>
    <property type="match status" value="1"/>
</dbReference>
<reference key="1">
    <citation type="journal article" date="1993" name="Mol. Microbiol.">
        <title>Conservation of motifs within the unusually variable polypeptide sequences of type I restriction and modification enzymes.</title>
        <authorList>
            <person name="Murray N.E."/>
            <person name="Daniel A.S."/>
            <person name="Cowan G.M."/>
            <person name="Sharp P.M."/>
        </authorList>
    </citation>
    <scope>NUCLEOTIDE SEQUENCE [GENOMIC DNA]</scope>
    <source>
        <strain>A58</strain>
    </source>
</reference>
<reference key="2">
    <citation type="journal article" date="2003" name="Nucleic Acids Res.">
        <title>A nomenclature for restriction enzymes, DNA methyltransferases, homing endonucleases and their genes.</title>
        <authorList>
            <person name="Roberts R.J."/>
            <person name="Belfort M."/>
            <person name="Bestor T."/>
            <person name="Bhagwat A.S."/>
            <person name="Bickle T.A."/>
            <person name="Bitinaite J."/>
            <person name="Blumenthal R.M."/>
            <person name="Degtyarev S.K."/>
            <person name="Dryden D.T."/>
            <person name="Dybvig K."/>
            <person name="Firman K."/>
            <person name="Gromova E.S."/>
            <person name="Gumport R.I."/>
            <person name="Halford S.E."/>
            <person name="Hattman S."/>
            <person name="Heitman J."/>
            <person name="Hornby D.P."/>
            <person name="Janulaitis A."/>
            <person name="Jeltsch A."/>
            <person name="Josephsen J."/>
            <person name="Kiss A."/>
            <person name="Klaenhammer T.R."/>
            <person name="Kobayashi I."/>
            <person name="Kong H."/>
            <person name="Krueger D.H."/>
            <person name="Lacks S."/>
            <person name="Marinus M.G."/>
            <person name="Miyahara M."/>
            <person name="Morgan R.D."/>
            <person name="Murray N.E."/>
            <person name="Nagaraja V."/>
            <person name="Piekarowicz A."/>
            <person name="Pingoud A."/>
            <person name="Raleigh E."/>
            <person name="Rao D.N."/>
            <person name="Reich N."/>
            <person name="Repin V.E."/>
            <person name="Selker E.U."/>
            <person name="Shaw P.C."/>
            <person name="Stein D.C."/>
            <person name="Stoddard B.L."/>
            <person name="Szybalski W."/>
            <person name="Trautner T.A."/>
            <person name="Van Etten J.L."/>
            <person name="Vitor J.M."/>
            <person name="Wilson G.G."/>
            <person name="Xu S.Y."/>
        </authorList>
    </citation>
    <scope>NOMENCLATURE</scope>
    <scope>SUBTYPE</scope>
</reference>
<keyword id="KW-0238">DNA-binding</keyword>
<keyword id="KW-0489">Methyltransferase</keyword>
<keyword id="KW-0680">Restriction system</keyword>
<keyword id="KW-0949">S-adenosyl-L-methionine</keyword>
<keyword id="KW-0808">Transferase</keyword>
<sequence length="490" mass="55620">MSISSVIKSLQDIMRKDAGVDGDAQRLGQLSWLLFLKIFDTQEEELELEQDDYQFPIPQRYLWRSWAANSEGITGDALLEFVNDDLFPTLKNLTAPIDKNPRGFVVKQAFSDAYNYMKNGTLLRQVINKLNEIDFSSSQERHLFGDIYEQILRDLQSAGNAGEFYTPRAVTRFMVNRIDPKLGESIMDPACGTGGFLACAFDHVKDNYVKTTEDHKTLQQQIYGVEKKQLPHLLCTTNMLLHGIEVPVQIRHDNTLNKPLSSWDEQVDVIVTNPPFGGTEEDGIEKNFPAEMQTRETADLFLQLIIEVLADKGRAAVVLPDGTLFGEGVKTKIKKLLTEECNLHTIVRLPNGVFNPYTGIKTNILFFTKGQPTKEVWFYEHPYPDGVKNYSKTKPMKFEEFQAEIDWWGNEADDFASREENNQAWKVGIDDIIARNFNLDIKNPYQGETISHDPDELLAQYQTQQAEIGELRNQLRDILGAALAGNKGAN</sequence>
<gene>
    <name type="primary">hsdM</name>
</gene>
<evidence type="ECO:0000250" key="1">
    <source>
        <dbReference type="UniProtKB" id="P08957"/>
    </source>
</evidence>
<evidence type="ECO:0000250" key="2">
    <source>
        <dbReference type="UniProtKB" id="Q89Z59"/>
    </source>
</evidence>
<evidence type="ECO:0000303" key="3">
    <source>
    </source>
</evidence>
<evidence type="ECO:0000305" key="4"/>
<accession>Q47282</accession>
<name>T1ME_ECOLX</name>
<proteinExistence type="inferred from homology"/>
<protein>
    <recommendedName>
        <fullName evidence="4">Type I restriction enzyme EcoEI methylase subunit</fullName>
        <shortName>M protein</shortName>
        <ecNumber evidence="1">2.1.1.72</ecNumber>
    </recommendedName>
    <alternativeName>
        <fullName evidence="3">Type I methyltransferase M.EcoEI</fullName>
        <shortName evidence="3">M.EcoEI</shortName>
    </alternativeName>
</protein>
<feature type="chain" id="PRO_0000088021" description="Type I restriction enzyme EcoEI methylase subunit">
    <location>
        <begin position="1"/>
        <end position="490"/>
    </location>
</feature>
<feature type="binding site" evidence="2">
    <location>
        <begin position="163"/>
        <end position="168"/>
    </location>
    <ligand>
        <name>S-adenosyl-L-methionine</name>
        <dbReference type="ChEBI" id="CHEBI:59789"/>
    </ligand>
</feature>
<feature type="binding site" evidence="2">
    <location>
        <begin position="193"/>
        <end position="195"/>
    </location>
    <ligand>
        <name>S-adenosyl-L-methionine</name>
        <dbReference type="ChEBI" id="CHEBI:59789"/>
    </ligand>
</feature>
<feature type="binding site" evidence="2">
    <location>
        <position position="226"/>
    </location>
    <ligand>
        <name>S-adenosyl-L-methionine</name>
        <dbReference type="ChEBI" id="CHEBI:59789"/>
    </ligand>
</feature>